<accession>Q04JX3</accession>
<feature type="chain" id="PRO_1000022560" description="Chorismate synthase">
    <location>
        <begin position="1"/>
        <end position="388"/>
    </location>
</feature>
<feature type="binding site" evidence="1">
    <location>
        <position position="39"/>
    </location>
    <ligand>
        <name>NADP(+)</name>
        <dbReference type="ChEBI" id="CHEBI:58349"/>
    </ligand>
</feature>
<feature type="binding site" evidence="1">
    <location>
        <position position="45"/>
    </location>
    <ligand>
        <name>NADP(+)</name>
        <dbReference type="ChEBI" id="CHEBI:58349"/>
    </ligand>
</feature>
<feature type="binding site" evidence="1">
    <location>
        <begin position="130"/>
        <end position="132"/>
    </location>
    <ligand>
        <name>FMN</name>
        <dbReference type="ChEBI" id="CHEBI:58210"/>
    </ligand>
</feature>
<feature type="binding site" evidence="1">
    <location>
        <begin position="251"/>
        <end position="252"/>
    </location>
    <ligand>
        <name>FMN</name>
        <dbReference type="ChEBI" id="CHEBI:58210"/>
    </ligand>
</feature>
<feature type="binding site" evidence="1">
    <location>
        <position position="296"/>
    </location>
    <ligand>
        <name>FMN</name>
        <dbReference type="ChEBI" id="CHEBI:58210"/>
    </ligand>
</feature>
<feature type="binding site" evidence="1">
    <location>
        <begin position="311"/>
        <end position="315"/>
    </location>
    <ligand>
        <name>FMN</name>
        <dbReference type="ChEBI" id="CHEBI:58210"/>
    </ligand>
</feature>
<feature type="binding site" evidence="1">
    <location>
        <position position="337"/>
    </location>
    <ligand>
        <name>FMN</name>
        <dbReference type="ChEBI" id="CHEBI:58210"/>
    </ligand>
</feature>
<reference key="1">
    <citation type="journal article" date="2007" name="J. Bacteriol.">
        <title>Genome sequence of Avery's virulent serotype 2 strain D39 of Streptococcus pneumoniae and comparison with that of unencapsulated laboratory strain R6.</title>
        <authorList>
            <person name="Lanie J.A."/>
            <person name="Ng W.-L."/>
            <person name="Kazmierczak K.M."/>
            <person name="Andrzejewski T.M."/>
            <person name="Davidsen T.M."/>
            <person name="Wayne K.J."/>
            <person name="Tettelin H."/>
            <person name="Glass J.I."/>
            <person name="Winkler M.E."/>
        </authorList>
    </citation>
    <scope>NUCLEOTIDE SEQUENCE [LARGE SCALE GENOMIC DNA]</scope>
    <source>
        <strain>D39 / NCTC 7466</strain>
    </source>
</reference>
<name>AROC_STRP2</name>
<keyword id="KW-0028">Amino-acid biosynthesis</keyword>
<keyword id="KW-0057">Aromatic amino acid biosynthesis</keyword>
<keyword id="KW-0274">FAD</keyword>
<keyword id="KW-0285">Flavoprotein</keyword>
<keyword id="KW-0288">FMN</keyword>
<keyword id="KW-0456">Lyase</keyword>
<keyword id="KW-0521">NADP</keyword>
<keyword id="KW-1185">Reference proteome</keyword>
<proteinExistence type="inferred from homology"/>
<organism>
    <name type="scientific">Streptococcus pneumoniae serotype 2 (strain D39 / NCTC 7466)</name>
    <dbReference type="NCBI Taxonomy" id="373153"/>
    <lineage>
        <taxon>Bacteria</taxon>
        <taxon>Bacillati</taxon>
        <taxon>Bacillota</taxon>
        <taxon>Bacilli</taxon>
        <taxon>Lactobacillales</taxon>
        <taxon>Streptococcaceae</taxon>
        <taxon>Streptococcus</taxon>
    </lineage>
</organism>
<comment type="function">
    <text evidence="1">Catalyzes the anti-1,4-elimination of the C-3 phosphate and the C-6 proR hydrogen from 5-enolpyruvylshikimate-3-phosphate (EPSP) to yield chorismate, which is the branch point compound that serves as the starting substrate for the three terminal pathways of aromatic amino acid biosynthesis. This reaction introduces a second double bond into the aromatic ring system.</text>
</comment>
<comment type="catalytic activity">
    <reaction evidence="1">
        <text>5-O-(1-carboxyvinyl)-3-phosphoshikimate = chorismate + phosphate</text>
        <dbReference type="Rhea" id="RHEA:21020"/>
        <dbReference type="ChEBI" id="CHEBI:29748"/>
        <dbReference type="ChEBI" id="CHEBI:43474"/>
        <dbReference type="ChEBI" id="CHEBI:57701"/>
        <dbReference type="EC" id="4.2.3.5"/>
    </reaction>
</comment>
<comment type="cofactor">
    <cofactor evidence="1">
        <name>FMNH2</name>
        <dbReference type="ChEBI" id="CHEBI:57618"/>
    </cofactor>
    <text evidence="1">Reduced FMN (FMNH(2)).</text>
</comment>
<comment type="pathway">
    <text evidence="1">Metabolic intermediate biosynthesis; chorismate biosynthesis; chorismate from D-erythrose 4-phosphate and phosphoenolpyruvate: step 7/7.</text>
</comment>
<comment type="subunit">
    <text evidence="1">Homotetramer.</text>
</comment>
<comment type="similarity">
    <text evidence="1">Belongs to the chorismate synthase family.</text>
</comment>
<dbReference type="EC" id="4.2.3.5" evidence="1"/>
<dbReference type="EMBL" id="CP000410">
    <property type="protein sequence ID" value="ABJ54313.1"/>
    <property type="molecule type" value="Genomic_DNA"/>
</dbReference>
<dbReference type="RefSeq" id="WP_001269860.1">
    <property type="nucleotide sequence ID" value="NZ_JAMLJR010000005.1"/>
</dbReference>
<dbReference type="SMR" id="Q04JX3"/>
<dbReference type="PaxDb" id="373153-SPD_1208"/>
<dbReference type="KEGG" id="spd:SPD_1208"/>
<dbReference type="eggNOG" id="COG0082">
    <property type="taxonomic scope" value="Bacteria"/>
</dbReference>
<dbReference type="HOGENOM" id="CLU_034547_2_0_9"/>
<dbReference type="BioCyc" id="SPNE373153:G1G6V-1306-MONOMER"/>
<dbReference type="UniPathway" id="UPA00053">
    <property type="reaction ID" value="UER00090"/>
</dbReference>
<dbReference type="Proteomes" id="UP000001452">
    <property type="component" value="Chromosome"/>
</dbReference>
<dbReference type="GO" id="GO:0005829">
    <property type="term" value="C:cytosol"/>
    <property type="evidence" value="ECO:0007669"/>
    <property type="project" value="TreeGrafter"/>
</dbReference>
<dbReference type="GO" id="GO:0004107">
    <property type="term" value="F:chorismate synthase activity"/>
    <property type="evidence" value="ECO:0007669"/>
    <property type="project" value="UniProtKB-UniRule"/>
</dbReference>
<dbReference type="GO" id="GO:0010181">
    <property type="term" value="F:FMN binding"/>
    <property type="evidence" value="ECO:0007669"/>
    <property type="project" value="TreeGrafter"/>
</dbReference>
<dbReference type="GO" id="GO:0008652">
    <property type="term" value="P:amino acid biosynthetic process"/>
    <property type="evidence" value="ECO:0007669"/>
    <property type="project" value="UniProtKB-KW"/>
</dbReference>
<dbReference type="GO" id="GO:0009073">
    <property type="term" value="P:aromatic amino acid family biosynthetic process"/>
    <property type="evidence" value="ECO:0007669"/>
    <property type="project" value="UniProtKB-KW"/>
</dbReference>
<dbReference type="GO" id="GO:0009423">
    <property type="term" value="P:chorismate biosynthetic process"/>
    <property type="evidence" value="ECO:0007669"/>
    <property type="project" value="UniProtKB-UniRule"/>
</dbReference>
<dbReference type="CDD" id="cd07304">
    <property type="entry name" value="Chorismate_synthase"/>
    <property type="match status" value="1"/>
</dbReference>
<dbReference type="FunFam" id="3.60.150.10:FF:000002">
    <property type="entry name" value="Chorismate synthase"/>
    <property type="match status" value="1"/>
</dbReference>
<dbReference type="Gene3D" id="3.60.150.10">
    <property type="entry name" value="Chorismate synthase AroC"/>
    <property type="match status" value="1"/>
</dbReference>
<dbReference type="HAMAP" id="MF_00300">
    <property type="entry name" value="Chorismate_synth"/>
    <property type="match status" value="1"/>
</dbReference>
<dbReference type="InterPro" id="IPR000453">
    <property type="entry name" value="Chorismate_synth"/>
</dbReference>
<dbReference type="InterPro" id="IPR035904">
    <property type="entry name" value="Chorismate_synth_AroC_sf"/>
</dbReference>
<dbReference type="InterPro" id="IPR020541">
    <property type="entry name" value="Chorismate_synthase_CS"/>
</dbReference>
<dbReference type="NCBIfam" id="TIGR00033">
    <property type="entry name" value="aroC"/>
    <property type="match status" value="1"/>
</dbReference>
<dbReference type="NCBIfam" id="NF003793">
    <property type="entry name" value="PRK05382.1"/>
    <property type="match status" value="1"/>
</dbReference>
<dbReference type="PANTHER" id="PTHR21085">
    <property type="entry name" value="CHORISMATE SYNTHASE"/>
    <property type="match status" value="1"/>
</dbReference>
<dbReference type="PANTHER" id="PTHR21085:SF0">
    <property type="entry name" value="CHORISMATE SYNTHASE"/>
    <property type="match status" value="1"/>
</dbReference>
<dbReference type="Pfam" id="PF01264">
    <property type="entry name" value="Chorismate_synt"/>
    <property type="match status" value="1"/>
</dbReference>
<dbReference type="PIRSF" id="PIRSF001456">
    <property type="entry name" value="Chorismate_synth"/>
    <property type="match status" value="1"/>
</dbReference>
<dbReference type="SUPFAM" id="SSF103263">
    <property type="entry name" value="Chorismate synthase, AroC"/>
    <property type="match status" value="1"/>
</dbReference>
<dbReference type="PROSITE" id="PS00787">
    <property type="entry name" value="CHORISMATE_SYNTHASE_1"/>
    <property type="match status" value="1"/>
</dbReference>
<dbReference type="PROSITE" id="PS00788">
    <property type="entry name" value="CHORISMATE_SYNTHASE_2"/>
    <property type="match status" value="1"/>
</dbReference>
<dbReference type="PROSITE" id="PS00789">
    <property type="entry name" value="CHORISMATE_SYNTHASE_3"/>
    <property type="match status" value="1"/>
</dbReference>
<sequence>MRYLTAGESHGPRLTAIIEGIPAGLPLTAEDINEDLRRRQGGYGRGGRMKIENDQVVFTSGVRHGKTTGAPITMDVINKDHQKWLDIMSAEDIEDRLKSKRKITHPRPGHADLVGGIKYRFDDLRNSLERSSARETTMRVAVGAVAKRLLAELDMEIANHVVVFGGKEIDVPENLTVAEIKQRAAQSEVSIVNQEREQEIKDYIDQIKRDGDTIGGVVETVVGGVPVGLGSYVQWDRKLDARLAQAVVSINAFKGVEFGLGFEAGYRKGSQVMDEILWSKEDGYTRRTNNLGGFEGGMTNGQPIVVRGVMKPIPTLYKPLMSVDIETHEPYKATVERSDPTALPAAGMVMEAVVATVLAQEILEKFSSDNLEELKEAVAKHRDYTKNY</sequence>
<protein>
    <recommendedName>
        <fullName evidence="1">Chorismate synthase</fullName>
        <shortName evidence="1">CS</shortName>
        <ecNumber evidence="1">4.2.3.5</ecNumber>
    </recommendedName>
    <alternativeName>
        <fullName evidence="1">5-enolpyruvylshikimate-3-phosphate phospholyase</fullName>
    </alternativeName>
</protein>
<gene>
    <name evidence="1" type="primary">aroC</name>
    <name type="ordered locus">SPD_1208</name>
</gene>
<evidence type="ECO:0000255" key="1">
    <source>
        <dbReference type="HAMAP-Rule" id="MF_00300"/>
    </source>
</evidence>